<proteinExistence type="inferred from homology"/>
<feature type="chain" id="PRO_1000076964" description="Thymidylate kinase">
    <location>
        <begin position="1"/>
        <end position="213"/>
    </location>
</feature>
<feature type="binding site" evidence="1">
    <location>
        <begin position="9"/>
        <end position="16"/>
    </location>
    <ligand>
        <name>ATP</name>
        <dbReference type="ChEBI" id="CHEBI:30616"/>
    </ligand>
</feature>
<protein>
    <recommendedName>
        <fullName evidence="1">Thymidylate kinase</fullName>
        <ecNumber evidence="1">2.7.4.9</ecNumber>
    </recommendedName>
    <alternativeName>
        <fullName evidence="1">dTMP kinase</fullName>
    </alternativeName>
</protein>
<reference key="1">
    <citation type="submission" date="2007-05" db="EMBL/GenBank/DDBJ databases">
        <title>Complete sequence of Geobacter uraniireducens Rf4.</title>
        <authorList>
            <consortium name="US DOE Joint Genome Institute"/>
            <person name="Copeland A."/>
            <person name="Lucas S."/>
            <person name="Lapidus A."/>
            <person name="Barry K."/>
            <person name="Detter J.C."/>
            <person name="Glavina del Rio T."/>
            <person name="Hammon N."/>
            <person name="Israni S."/>
            <person name="Dalin E."/>
            <person name="Tice H."/>
            <person name="Pitluck S."/>
            <person name="Chertkov O."/>
            <person name="Brettin T."/>
            <person name="Bruce D."/>
            <person name="Han C."/>
            <person name="Schmutz J."/>
            <person name="Larimer F."/>
            <person name="Land M."/>
            <person name="Hauser L."/>
            <person name="Kyrpides N."/>
            <person name="Mikhailova N."/>
            <person name="Shelobolina E."/>
            <person name="Aklujkar M."/>
            <person name="Lovley D."/>
            <person name="Richardson P."/>
        </authorList>
    </citation>
    <scope>NUCLEOTIDE SEQUENCE [LARGE SCALE GENOMIC DNA]</scope>
    <source>
        <strain>ATCC BAA-1134 / JCM 13001 / Rf4</strain>
    </source>
</reference>
<gene>
    <name evidence="1" type="primary">tmk</name>
    <name type="ordered locus">Gura_3153</name>
</gene>
<comment type="function">
    <text evidence="1">Phosphorylation of dTMP to form dTDP in both de novo and salvage pathways of dTTP synthesis.</text>
</comment>
<comment type="catalytic activity">
    <reaction evidence="1">
        <text>dTMP + ATP = dTDP + ADP</text>
        <dbReference type="Rhea" id="RHEA:13517"/>
        <dbReference type="ChEBI" id="CHEBI:30616"/>
        <dbReference type="ChEBI" id="CHEBI:58369"/>
        <dbReference type="ChEBI" id="CHEBI:63528"/>
        <dbReference type="ChEBI" id="CHEBI:456216"/>
        <dbReference type="EC" id="2.7.4.9"/>
    </reaction>
</comment>
<comment type="similarity">
    <text evidence="1">Belongs to the thymidylate kinase family.</text>
</comment>
<dbReference type="EC" id="2.7.4.9" evidence="1"/>
<dbReference type="EMBL" id="CP000698">
    <property type="protein sequence ID" value="ABQ27314.1"/>
    <property type="molecule type" value="Genomic_DNA"/>
</dbReference>
<dbReference type="RefSeq" id="WP_011939980.1">
    <property type="nucleotide sequence ID" value="NC_009483.1"/>
</dbReference>
<dbReference type="SMR" id="A5G696"/>
<dbReference type="STRING" id="351605.Gura_3153"/>
<dbReference type="KEGG" id="gur:Gura_3153"/>
<dbReference type="HOGENOM" id="CLU_049131_0_2_7"/>
<dbReference type="OrthoDB" id="9774907at2"/>
<dbReference type="Proteomes" id="UP000006695">
    <property type="component" value="Chromosome"/>
</dbReference>
<dbReference type="GO" id="GO:0005829">
    <property type="term" value="C:cytosol"/>
    <property type="evidence" value="ECO:0007669"/>
    <property type="project" value="TreeGrafter"/>
</dbReference>
<dbReference type="GO" id="GO:0005524">
    <property type="term" value="F:ATP binding"/>
    <property type="evidence" value="ECO:0007669"/>
    <property type="project" value="UniProtKB-UniRule"/>
</dbReference>
<dbReference type="GO" id="GO:0004798">
    <property type="term" value="F:dTMP kinase activity"/>
    <property type="evidence" value="ECO:0007669"/>
    <property type="project" value="UniProtKB-UniRule"/>
</dbReference>
<dbReference type="GO" id="GO:0006233">
    <property type="term" value="P:dTDP biosynthetic process"/>
    <property type="evidence" value="ECO:0007669"/>
    <property type="project" value="InterPro"/>
</dbReference>
<dbReference type="GO" id="GO:0006235">
    <property type="term" value="P:dTTP biosynthetic process"/>
    <property type="evidence" value="ECO:0007669"/>
    <property type="project" value="UniProtKB-UniRule"/>
</dbReference>
<dbReference type="GO" id="GO:0006227">
    <property type="term" value="P:dUDP biosynthetic process"/>
    <property type="evidence" value="ECO:0007669"/>
    <property type="project" value="TreeGrafter"/>
</dbReference>
<dbReference type="CDD" id="cd01672">
    <property type="entry name" value="TMPK"/>
    <property type="match status" value="1"/>
</dbReference>
<dbReference type="FunFam" id="3.40.50.300:FF:000225">
    <property type="entry name" value="Thymidylate kinase"/>
    <property type="match status" value="1"/>
</dbReference>
<dbReference type="Gene3D" id="3.40.50.300">
    <property type="entry name" value="P-loop containing nucleotide triphosphate hydrolases"/>
    <property type="match status" value="1"/>
</dbReference>
<dbReference type="HAMAP" id="MF_00165">
    <property type="entry name" value="Thymidylate_kinase"/>
    <property type="match status" value="1"/>
</dbReference>
<dbReference type="InterPro" id="IPR027417">
    <property type="entry name" value="P-loop_NTPase"/>
</dbReference>
<dbReference type="InterPro" id="IPR039430">
    <property type="entry name" value="Thymidylate_kin-like_dom"/>
</dbReference>
<dbReference type="InterPro" id="IPR018094">
    <property type="entry name" value="Thymidylate_kinase"/>
</dbReference>
<dbReference type="NCBIfam" id="TIGR00041">
    <property type="entry name" value="DTMP_kinase"/>
    <property type="match status" value="1"/>
</dbReference>
<dbReference type="PANTHER" id="PTHR10344">
    <property type="entry name" value="THYMIDYLATE KINASE"/>
    <property type="match status" value="1"/>
</dbReference>
<dbReference type="PANTHER" id="PTHR10344:SF4">
    <property type="entry name" value="UMP-CMP KINASE 2, MITOCHONDRIAL"/>
    <property type="match status" value="1"/>
</dbReference>
<dbReference type="Pfam" id="PF02223">
    <property type="entry name" value="Thymidylate_kin"/>
    <property type="match status" value="1"/>
</dbReference>
<dbReference type="SUPFAM" id="SSF52540">
    <property type="entry name" value="P-loop containing nucleoside triphosphate hydrolases"/>
    <property type="match status" value="1"/>
</dbReference>
<keyword id="KW-0067">ATP-binding</keyword>
<keyword id="KW-0418">Kinase</keyword>
<keyword id="KW-0545">Nucleotide biosynthesis</keyword>
<keyword id="KW-0547">Nucleotide-binding</keyword>
<keyword id="KW-1185">Reference proteome</keyword>
<keyword id="KW-0808">Transferase</keyword>
<organism>
    <name type="scientific">Geotalea uraniireducens (strain Rf4)</name>
    <name type="common">Geobacter uraniireducens</name>
    <dbReference type="NCBI Taxonomy" id="351605"/>
    <lineage>
        <taxon>Bacteria</taxon>
        <taxon>Pseudomonadati</taxon>
        <taxon>Thermodesulfobacteriota</taxon>
        <taxon>Desulfuromonadia</taxon>
        <taxon>Geobacterales</taxon>
        <taxon>Geobacteraceae</taxon>
        <taxon>Geotalea</taxon>
    </lineage>
</organism>
<accession>A5G696</accession>
<evidence type="ECO:0000255" key="1">
    <source>
        <dbReference type="HAMAP-Rule" id="MF_00165"/>
    </source>
</evidence>
<name>KTHY_GEOUR</name>
<sequence>MGCFITFEGVEGCGKTTQIKLLAQHLTEQGHTVIVTREPGGCPIADQARAILLDADNRAMTPTTELLLYAAARAQHVQEIVKPALAANKVVLCDRFTDATIAYQGYGRGLDPATIAYLNDLATDGLKPRLTVLLDCPVEVGLKRAFDRINGAAGAREERFELESVLFHRKVRDGYLKLAEDEPERFIIIDGSQGVQETEAAITAAVLARLAEG</sequence>